<protein>
    <recommendedName>
        <fullName evidence="13">Sterol regulatory element-binding protein cleavage-activating protein</fullName>
        <shortName evidence="13">SCAP</shortName>
        <shortName evidence="13">SREBP cleavage-activating protein</shortName>
    </recommendedName>
</protein>
<name>SCAP_HUMAN</name>
<gene>
    <name evidence="13 19" type="primary">SCAP</name>
    <name evidence="17" type="synonym">KIAA0199</name>
    <name evidence="16" type="ORF">PSEC0227</name>
</gene>
<sequence length="1279" mass="139729">MTLTERLREKISRAFYNHGLLCASYPIPIILFTGFCILACCYPLLKLPLPGTGPVEFTTPVKDYSPPPVDSDRKQGEPTEQPEWYVGAPVAYVQQIFVKSSVFPWHKNLLAVDVFRSPLSRAFQLVEEIRNHVLRDSSGIRSLEELCLQVTDLLPGLRKLRNLLPEHGCLLLSPGNFWQNDWERFHADPDIIGTIHQHEPKTLQTSATLKDLLFGVPGKYSGVSLYTRKRMVSYTITLVFQHYHAKFLGSLRARLMLLHPSPNCSLRAESLVHVHFKEEIGVAELIPLVTTYIILFAYIYFSTRKIDMVKSKWGLALAAVVTVLSSLLMSVGLCTLFGLTPTLNGGEIFPYLVVVIGLENVLVLTKSVVSTPVDLEVKLRIAQGLSSESWSIMKNMATELGIILIGYFTLVPAIQEFCLFAVVGLVSDFFLQMLFFTTVLSIDIRRMELADLNKRLPPEACLPSAKPVGQPTRYERQLAVRPSTPHTITLQPSSFRNLRLPKRLRVVYFLARTRLAQRLIMAGTVVWIGILVYTDPAGLRNYLAAQVTEQSPLGEGALAPMPVPSGMLPPSHPDPAFSIFPPDAPKLPENQTSPGESPERGGPAEVVHDSPVPEVTWGPEDEELWRKLSFRHWPTLFSYYNITLAKRYISLLPVIPVTLRLNPREALEGRHPQDGRSAWPPPGPIPAGHWEAGPKGPGGVQAHGDVTLYKVAALGLATGIVLVLLLLCLYRVLCPRNYGQLGGGPGRRRRGELPCDDYGYAPPETEIVPLVLRGHLMDIECLASDGMLLVSCCLAGHVCVWDAQTGDCLTRIPRPGRQRRDSGVGSGLEAQESWERLSDGGKAGPEEPGDSPPLRHRPRGPPPPSLFGDQPDLTCLIDTNFSAQPRSSQPTQPEPRHRAVCGRSRDSPGYDFSCLVQRVYQEEGLAAVCTPALRPPSPGPVLSQAPEDEGGSPEKGSPSLAWAPSAEGSIWSLELQGNLIVVGRSSGRLEVWDAIEGVLCCSSEEVSSGITALVFLDKRIVAARLNGSLDFFSLETHTALSPLQFRGTPGRGSSPASPVYSSSDTVACHLTHTVPCAHQKPITALKAAAGRLVTGSQDHTLRVFRLEDSCCLFTLQGHSGAITTVYIDQTMVLASGGQDGAICLWDVLTGSRVSHVFAHRGDVTSLTCTTSCVISSGLDDLISIWDRSTGIKFYSIQQDLGCGASLGVISDNLLVTGGQGCVSFWDLNYGDLLQTVYLGKNSEAQPARQILVLDNAAIVCNFGSELSLVYVPSVLEKLD</sequence>
<keyword id="KW-0002">3D-structure</keyword>
<keyword id="KW-0025">Alternative splicing</keyword>
<keyword id="KW-0153">Cholesterol metabolism</keyword>
<keyword id="KW-0968">Cytoplasmic vesicle</keyword>
<keyword id="KW-0256">Endoplasmic reticulum</keyword>
<keyword id="KW-0325">Glycoprotein</keyword>
<keyword id="KW-0333">Golgi apparatus</keyword>
<keyword id="KW-1017">Isopeptide bond</keyword>
<keyword id="KW-0443">Lipid metabolism</keyword>
<keyword id="KW-0446">Lipid-binding</keyword>
<keyword id="KW-0472">Membrane</keyword>
<keyword id="KW-0488">Methylation</keyword>
<keyword id="KW-0597">Phosphoprotein</keyword>
<keyword id="KW-1267">Proteomics identification</keyword>
<keyword id="KW-1185">Reference proteome</keyword>
<keyword id="KW-0677">Repeat</keyword>
<keyword id="KW-0753">Steroid metabolism</keyword>
<keyword id="KW-1207">Sterol metabolism</keyword>
<keyword id="KW-0812">Transmembrane</keyword>
<keyword id="KW-1133">Transmembrane helix</keyword>
<keyword id="KW-0832">Ubl conjugation</keyword>
<keyword id="KW-0853">WD repeat</keyword>
<evidence type="ECO:0000250" key="1">
    <source>
        <dbReference type="UniProtKB" id="P97260"/>
    </source>
</evidence>
<evidence type="ECO:0000250" key="2">
    <source>
        <dbReference type="UniProtKB" id="Q6GQT6"/>
    </source>
</evidence>
<evidence type="ECO:0000255" key="3"/>
<evidence type="ECO:0000255" key="4">
    <source>
        <dbReference type="PROSITE-ProRule" id="PRU00199"/>
    </source>
</evidence>
<evidence type="ECO:0000256" key="5">
    <source>
        <dbReference type="SAM" id="MobiDB-lite"/>
    </source>
</evidence>
<evidence type="ECO:0000269" key="6">
    <source>
    </source>
</evidence>
<evidence type="ECO:0000269" key="7">
    <source>
    </source>
</evidence>
<evidence type="ECO:0000269" key="8">
    <source>
    </source>
</evidence>
<evidence type="ECO:0000269" key="9">
    <source>
    </source>
</evidence>
<evidence type="ECO:0000269" key="10">
    <source>
    </source>
</evidence>
<evidence type="ECO:0000269" key="11">
    <source>
    </source>
</evidence>
<evidence type="ECO:0000269" key="12">
    <source>
    </source>
</evidence>
<evidence type="ECO:0000303" key="13">
    <source>
    </source>
</evidence>
<evidence type="ECO:0000303" key="14">
    <source>
    </source>
</evidence>
<evidence type="ECO:0000303" key="15">
    <source>
    </source>
</evidence>
<evidence type="ECO:0000303" key="16">
    <source>
    </source>
</evidence>
<evidence type="ECO:0000303" key="17">
    <source>
    </source>
</evidence>
<evidence type="ECO:0000305" key="18"/>
<evidence type="ECO:0000312" key="19">
    <source>
        <dbReference type="HGNC" id="HGNC:30634"/>
    </source>
</evidence>
<evidence type="ECO:0007744" key="20">
    <source>
    </source>
</evidence>
<evidence type="ECO:0007744" key="21">
    <source>
    </source>
</evidence>
<evidence type="ECO:0007744" key="22">
    <source>
    </source>
</evidence>
<comment type="function">
    <text evidence="1 11">Escort protein required for cholesterol as well as lipid homeostasis (By similarity). Regulates export of the SCAP-SREBP complex from the endoplasmic reticulum to the Golgi upon low cholesterol, thereby regulating the processing of sterol regulatory element-binding proteins (SREBPs) SREBF1/SREBP1 and SREBF2/SREBP2 (PubMed:26311497). At high sterol concentrations, formation of a ternary complex with INSIG (INSIG1 or INSIG2) leads to mask the ER export signal in SCAP, promoting retention of the complex in the endoplasmic reticulum (By similarity). Low sterol concentrations trigger release of INSIG, a conformational change in the SSD domain of SCAP, unmasking of the ER export signal, promoting recruitment into COPII-coated vesicles and transport of the SCAP-SREBP to the Golgi: in the Golgi, SREBPs are then processed, releasing the transcription factor fragment of SREBPs from the membrane, its import into the nucleus and up-regulation of LDLR, INSIG1 and the mevalonate pathway (PubMed:26311497). Binds cholesterol via its SSD domain (By similarity).</text>
</comment>
<comment type="subunit">
    <text evidence="1 8 9 10 11 12">Membrane region forms a homotetramer (By similarity). Component of the SCAP-SREBP complex (composed of SCAP and SREBF1/SREBP1 or SREBF2/SREBP2); interacts with SREBF1/SREBP1 or SREBF2/SREBP2 through its C-terminal cytoplasmic domain (PubMed:26311497). Forms a ternary complex with INSIG1 or INSIG2 through its transmembrane domains at high sterol concentrations (PubMed:17428920, PubMed:26160948). Interacts with PAQR3; the interaction anchors the SCAP-SREBP complex to the Golgi apparatus in low cholesterol conditions (PubMed:26311497). Interacts with the SEC23-SEC24 complex in a SAR1-GTP-dependent manner through an ER export signal in its third cytoplasmic loop (By similarity). Interacts with RNF139; the interaction inhibits the interaction of SCAP with SEC24B and hampering the ER to Golgi transport of the SCAP-SREBP complex (PubMed:19706601). Interacts with SPRING1 (PubMed:32111832).</text>
</comment>
<comment type="subcellular location">
    <subcellularLocation>
        <location evidence="12">Endoplasmic reticulum membrane</location>
        <topology evidence="3">Multi-pass membrane protein</topology>
    </subcellularLocation>
    <subcellularLocation>
        <location evidence="11 12">Golgi apparatus membrane</location>
        <topology evidence="3">Multi-pass membrane protein</topology>
    </subcellularLocation>
    <subcellularLocation>
        <location evidence="1">Cytoplasmic vesicle</location>
        <location evidence="1">COPII-coated vesicle membrane</location>
        <topology evidence="3">Multi-pass membrane protein</topology>
    </subcellularLocation>
    <text evidence="1 11 12">Moves from the endoplasmic reticulum to the Golgi in the absence of sterols (PubMed:26311497). Requires the presence of SPRING1 for proper localization to endoplasmic reticulum (PubMed:32111832).</text>
</comment>
<comment type="alternative products">
    <event type="alternative splicing"/>
    <isoform>
        <id>Q12770-1</id>
        <name>1</name>
        <sequence type="displayed"/>
    </isoform>
    <isoform>
        <id>Q12770-2</id>
        <name>2</name>
        <sequence type="described" ref="VSP_007451 VSP_021106"/>
    </isoform>
    <isoform>
        <id>Q12770-3</id>
        <name>3</name>
        <sequence type="described" ref="VSP_007452"/>
    </isoform>
    <isoform>
        <id>Q12770-4</id>
        <name>4</name>
        <sequence type="described" ref="VSP_021105 VSP_021106"/>
    </isoform>
</comment>
<comment type="induction">
    <text evidence="7">By androgen-bound AR and glucocorticoid-bound NR3C1 in a prostate cancer cell line (LNCaP).</text>
</comment>
<comment type="domain">
    <text evidence="1">Loop-1 binds to loop-7, enabling interaction with COPII-coated vesicles. When levels of cholesterol in the endoplasmic reticulum increase, Loop-1 binds to cholesterol instead, thereby disrupting direct binding between the two loops and preventing the SCAP-SREBP complex from exiting the endoplasmic reticulum.</text>
</comment>
<comment type="domain">
    <text evidence="1">Cholesterol bound to SSD domain of SCAP or oxysterol bound to INSIG (INSIG1 or INSIG2) leads to masking of an ER export signal (also named MELADL motif) on SCAP possibly by moving the signal further away from the ER membrane.</text>
</comment>
<comment type="PTM">
    <text evidence="2">Ubiquitinated at Lys-454 and Lys-466. RNF145 triggers ubiquitination of SCAP, likely inhibiting SCAP-SREBP complex transport to the Golgi apparatus and the subsequent processing/maturation of SREBF2/SREBP2.</text>
</comment>
<comment type="similarity">
    <text evidence="18">Belongs to the WD repeat SCAP family.</text>
</comment>
<comment type="sequence caution" evidence="18">
    <conflict type="erroneous initiation">
        <sequence resource="EMBL-CDS" id="BAA12111"/>
    </conflict>
    <text>Extended N-terminus.</text>
</comment>
<comment type="sequence caution" evidence="18">
    <conflict type="erroneous initiation">
        <sequence resource="EMBL-CDS" id="BAC11673"/>
    </conflict>
    <text>Truncated N-terminus.</text>
</comment>
<accession>Q12770</accession>
<accession>Q8N2E0</accession>
<accession>Q8WUA1</accession>
<feature type="chain" id="PRO_0000051208" description="Sterol regulatory element-binding protein cleavage-activating protein">
    <location>
        <begin position="1"/>
        <end position="1279"/>
    </location>
</feature>
<feature type="topological domain" description="Cytoplasmic" evidence="1">
    <location>
        <begin position="1"/>
        <end position="18"/>
    </location>
</feature>
<feature type="transmembrane region" description="Helical; Name=1" evidence="3">
    <location>
        <begin position="19"/>
        <end position="39"/>
    </location>
</feature>
<feature type="topological domain" description="Lumenal" evidence="1">
    <location>
        <begin position="40"/>
        <end position="279"/>
    </location>
</feature>
<feature type="transmembrane region" description="Helical; Name=2" evidence="3">
    <location>
        <begin position="280"/>
        <end position="300"/>
    </location>
</feature>
<feature type="topological domain" description="Cytoplasmic" evidence="1">
    <location>
        <begin position="301"/>
        <end position="312"/>
    </location>
</feature>
<feature type="transmembrane region" description="Helical; Name=3" evidence="3">
    <location>
        <begin position="313"/>
        <end position="333"/>
    </location>
</feature>
<feature type="topological domain" description="Lumenal" evidence="1">
    <location>
        <begin position="334"/>
        <end position="344"/>
    </location>
</feature>
<feature type="transmembrane region" description="Helical; Name=4" evidence="3">
    <location>
        <begin position="345"/>
        <end position="365"/>
    </location>
</feature>
<feature type="topological domain" description="Cytoplasmic" evidence="1">
    <location>
        <begin position="366"/>
        <end position="401"/>
    </location>
</feature>
<feature type="transmembrane region" description="Helical; Name=5" evidence="3">
    <location>
        <begin position="402"/>
        <end position="422"/>
    </location>
</feature>
<feature type="topological domain" description="Lumenal" evidence="1">
    <location>
        <position position="423"/>
    </location>
</feature>
<feature type="transmembrane region" description="Helical; Name=6" evidence="3">
    <location>
        <begin position="424"/>
        <end position="444"/>
    </location>
</feature>
<feature type="topological domain" description="Cytoplasmic" evidence="1">
    <location>
        <begin position="445"/>
        <end position="518"/>
    </location>
</feature>
<feature type="transmembrane region" description="Helical; Name=7" evidence="3">
    <location>
        <begin position="519"/>
        <end position="539"/>
    </location>
</feature>
<feature type="topological domain" description="Lumenal" evidence="1">
    <location>
        <begin position="540"/>
        <end position="709"/>
    </location>
</feature>
<feature type="transmembrane region" description="Helical; Name=8" evidence="3">
    <location>
        <begin position="710"/>
        <end position="730"/>
    </location>
</feature>
<feature type="topological domain" description="Cytoplasmic" evidence="1">
    <location>
        <begin position="731"/>
        <end position="1279"/>
    </location>
</feature>
<feature type="domain" description="SSD" evidence="4">
    <location>
        <begin position="284"/>
        <end position="442"/>
    </location>
</feature>
<feature type="repeat" description="WD 1">
    <location>
        <begin position="771"/>
        <end position="811"/>
    </location>
</feature>
<feature type="repeat" description="WD 2">
    <location>
        <begin position="952"/>
        <end position="1002"/>
    </location>
</feature>
<feature type="repeat" description="WD 3">
    <location>
        <begin position="1005"/>
        <end position="1042"/>
    </location>
</feature>
<feature type="repeat" description="WD 4">
    <location>
        <begin position="1077"/>
        <end position="1114"/>
    </location>
</feature>
<feature type="repeat" description="WD 5">
    <location>
        <begin position="1117"/>
        <end position="1155"/>
    </location>
</feature>
<feature type="repeat" description="WD 6">
    <location>
        <begin position="1158"/>
        <end position="1195"/>
    </location>
</feature>
<feature type="repeat" description="WD 7">
    <location>
        <begin position="1197"/>
        <end position="1235"/>
    </location>
</feature>
<feature type="region of interest" description="Loop-1" evidence="1">
    <location>
        <begin position="46"/>
        <end position="284"/>
    </location>
</feature>
<feature type="region of interest" description="Disordered" evidence="5">
    <location>
        <begin position="60"/>
        <end position="80"/>
    </location>
</feature>
<feature type="region of interest" description="Loop-7" evidence="1">
    <location>
        <begin position="535"/>
        <end position="710"/>
    </location>
</feature>
<feature type="region of interest" description="Disordered" evidence="5">
    <location>
        <begin position="579"/>
        <end position="615"/>
    </location>
</feature>
<feature type="region of interest" description="Disordered" evidence="5">
    <location>
        <begin position="668"/>
        <end position="696"/>
    </location>
</feature>
<feature type="region of interest" description="Interaction with SREBF2" evidence="1">
    <location>
        <begin position="731"/>
        <end position="1279"/>
    </location>
</feature>
<feature type="region of interest" description="Disordered" evidence="5">
    <location>
        <begin position="811"/>
        <end position="904"/>
    </location>
</feature>
<feature type="region of interest" description="Disordered" evidence="5">
    <location>
        <begin position="931"/>
        <end position="962"/>
    </location>
</feature>
<feature type="short sequence motif" description="ER export signal" evidence="1">
    <location>
        <begin position="447"/>
        <end position="452"/>
    </location>
</feature>
<feature type="compositionally biased region" description="Polar residues" evidence="5">
    <location>
        <begin position="877"/>
        <end position="891"/>
    </location>
</feature>
<feature type="modified residue" description="Phosphoserine" evidence="21 22">
    <location>
        <position position="822"/>
    </location>
</feature>
<feature type="modified residue" description="Phosphoserine" evidence="21">
    <location>
        <position position="838"/>
    </location>
</feature>
<feature type="modified residue" description="Phosphoserine" evidence="21">
    <location>
        <position position="851"/>
    </location>
</feature>
<feature type="modified residue" description="Phosphoserine" evidence="20 21">
    <location>
        <position position="907"/>
    </location>
</feature>
<feature type="modified residue" description="Phosphoserine" evidence="22">
    <location>
        <position position="937"/>
    </location>
</feature>
<feature type="modified residue" description="Omega-N-methylarginine" evidence="2">
    <location>
        <position position="1051"/>
    </location>
</feature>
<feature type="glycosylation site" description="N-linked (GlcNAc...) asparagine" evidence="3">
    <location>
        <position position="263"/>
    </location>
</feature>
<feature type="glycosylation site" description="N-linked (GlcNAc...) asparagine" evidence="3">
    <location>
        <position position="590"/>
    </location>
</feature>
<feature type="glycosylation site" description="N-linked (GlcNAc...) asparagine" evidence="3">
    <location>
        <position position="641"/>
    </location>
</feature>
<feature type="cross-link" description="Glycyl lysine isopeptide (Lys-Gly) (interchain with G-Cter in ubiquitin)" evidence="2">
    <location>
        <position position="454"/>
    </location>
</feature>
<feature type="cross-link" description="Glycyl lysine isopeptide (Lys-Gly) (interchain with G-Cter in ubiquitin)" evidence="2">
    <location>
        <position position="466"/>
    </location>
</feature>
<feature type="splice variant" id="VSP_021105" description="In isoform 4." evidence="14">
    <location>
        <begin position="1"/>
        <end position="392"/>
    </location>
</feature>
<feature type="splice variant" id="VSP_007451" description="In isoform 2." evidence="15">
    <location>
        <begin position="29"/>
        <end position="401"/>
    </location>
</feature>
<feature type="splice variant" id="VSP_007452" description="In isoform 3." evidence="16">
    <location>
        <begin position="476"/>
        <end position="983"/>
    </location>
</feature>
<feature type="splice variant" id="VSP_021106" description="In isoform 2 and isoform 4." evidence="14 15">
    <location>
        <position position="817"/>
    </location>
</feature>
<feature type="sequence variant" id="VAR_012203" description="In dbSNP:rs12487736." evidence="6">
    <original>V</original>
    <variation>I</variation>
    <location>
        <position position="798"/>
    </location>
</feature>
<feature type="sequence conflict" description="In Ref. 6; BAC11673." evidence="18" ref="6">
    <original>P</original>
    <variation>G</variation>
    <location>
        <position position="350"/>
    </location>
</feature>
<feature type="sequence conflict" description="In Ref. 6; BAC11673." evidence="18" ref="6">
    <original>S</original>
    <variation>T</variation>
    <location>
        <position position="427"/>
    </location>
</feature>
<feature type="sequence conflict" description="In Ref. 4; BAB55088." evidence="18" ref="4">
    <original>W</original>
    <variation>R</variation>
    <location>
        <position position="617"/>
    </location>
</feature>
<feature type="sequence conflict" description="In Ref. 4; BAB55088." evidence="18" ref="4">
    <original>L</original>
    <variation>Q</variation>
    <location>
        <position position="753"/>
    </location>
</feature>
<feature type="sequence conflict" description="In Ref. 4; BAB55088." evidence="18" ref="4">
    <original>V</original>
    <variation>A</variation>
    <location>
        <position position="941"/>
    </location>
</feature>
<feature type="sequence conflict" description="In Ref. 6; BAC11673." evidence="18" ref="6">
    <original>A</original>
    <variation>S</variation>
    <location>
        <position position="994"/>
    </location>
</feature>
<feature type="sequence conflict" description="In Ref. 6; BAC11673." evidence="18" ref="6">
    <original>R</original>
    <variation>G</variation>
    <location>
        <position position="1019"/>
    </location>
</feature>
<feature type="sequence conflict" description="In Ref. 4; BAB55088." evidence="18" ref="4">
    <original>E</original>
    <variation>G</variation>
    <location>
        <position position="1035"/>
    </location>
</feature>
<feature type="sequence conflict" description="In Ref. 4; BAB55088." evidence="18" ref="4">
    <original>K</original>
    <variation>E</variation>
    <location>
        <position position="1080"/>
    </location>
</feature>
<proteinExistence type="evidence at protein level"/>
<organism>
    <name type="scientific">Homo sapiens</name>
    <name type="common">Human</name>
    <dbReference type="NCBI Taxonomy" id="9606"/>
    <lineage>
        <taxon>Eukaryota</taxon>
        <taxon>Metazoa</taxon>
        <taxon>Chordata</taxon>
        <taxon>Craniata</taxon>
        <taxon>Vertebrata</taxon>
        <taxon>Euteleostomi</taxon>
        <taxon>Mammalia</taxon>
        <taxon>Eutheria</taxon>
        <taxon>Euarchontoglires</taxon>
        <taxon>Primates</taxon>
        <taxon>Haplorrhini</taxon>
        <taxon>Catarrhini</taxon>
        <taxon>Hominidae</taxon>
        <taxon>Homo</taxon>
    </lineage>
</organism>
<reference key="1">
    <citation type="journal article" date="1999" name="J. Hum. Genet.">
        <title>Genomic structure and chromosomal mapping of the human sterol regulatory element binding protein (SREBP) cleavage-activating protein (SCAP) gene.</title>
        <authorList>
            <person name="Nakajima T."/>
            <person name="Hamakubo T."/>
            <person name="Kodama T."/>
            <person name="Inazawa J."/>
            <person name="Emi M."/>
        </authorList>
    </citation>
    <scope>NUCLEOTIDE SEQUENCE [MRNA] (ISOFORM 1)</scope>
    <source>
        <tissue>Hepatoma</tissue>
    </source>
</reference>
<reference key="2">
    <citation type="journal article" date="1996" name="DNA Res.">
        <title>Prediction of the coding sequences of unidentified human genes. V. The coding sequences of 40 new genes (KIAA0161-KIAA0200) deduced by analysis of cDNA clones from human cell line KG-1.</title>
        <authorList>
            <person name="Nagase T."/>
            <person name="Seki N."/>
            <person name="Ishikawa K."/>
            <person name="Tanaka A."/>
            <person name="Nomura N."/>
        </authorList>
    </citation>
    <scope>NUCLEOTIDE SEQUENCE [LARGE SCALE MRNA] (ISOFORM 1)</scope>
    <source>
        <tissue>Bone marrow</tissue>
    </source>
</reference>
<reference key="3">
    <citation type="journal article" date="2002" name="DNA Res.">
        <title>Construction of expression-ready cDNA clones for KIAA genes: manual curation of 330 KIAA cDNA clones.</title>
        <authorList>
            <person name="Nakajima D."/>
            <person name="Okazaki N."/>
            <person name="Yamakawa H."/>
            <person name="Kikuno R."/>
            <person name="Ohara O."/>
            <person name="Nagase T."/>
        </authorList>
    </citation>
    <scope>SEQUENCE REVISION</scope>
</reference>
<reference key="4">
    <citation type="journal article" date="2004" name="Nat. Genet.">
        <title>Complete sequencing and characterization of 21,243 full-length human cDNAs.</title>
        <authorList>
            <person name="Ota T."/>
            <person name="Suzuki Y."/>
            <person name="Nishikawa T."/>
            <person name="Otsuki T."/>
            <person name="Sugiyama T."/>
            <person name="Irie R."/>
            <person name="Wakamatsu A."/>
            <person name="Hayashi K."/>
            <person name="Sato H."/>
            <person name="Nagai K."/>
            <person name="Kimura K."/>
            <person name="Makita H."/>
            <person name="Sekine M."/>
            <person name="Obayashi M."/>
            <person name="Nishi T."/>
            <person name="Shibahara T."/>
            <person name="Tanaka T."/>
            <person name="Ishii S."/>
            <person name="Yamamoto J."/>
            <person name="Saito K."/>
            <person name="Kawai Y."/>
            <person name="Isono Y."/>
            <person name="Nakamura Y."/>
            <person name="Nagahari K."/>
            <person name="Murakami K."/>
            <person name="Yasuda T."/>
            <person name="Iwayanagi T."/>
            <person name="Wagatsuma M."/>
            <person name="Shiratori A."/>
            <person name="Sudo H."/>
            <person name="Hosoiri T."/>
            <person name="Kaku Y."/>
            <person name="Kodaira H."/>
            <person name="Kondo H."/>
            <person name="Sugawara M."/>
            <person name="Takahashi M."/>
            <person name="Kanda K."/>
            <person name="Yokoi T."/>
            <person name="Furuya T."/>
            <person name="Kikkawa E."/>
            <person name="Omura Y."/>
            <person name="Abe K."/>
            <person name="Kamihara K."/>
            <person name="Katsuta N."/>
            <person name="Sato K."/>
            <person name="Tanikawa M."/>
            <person name="Yamazaki M."/>
            <person name="Ninomiya K."/>
            <person name="Ishibashi T."/>
            <person name="Yamashita H."/>
            <person name="Murakawa K."/>
            <person name="Fujimori K."/>
            <person name="Tanai H."/>
            <person name="Kimata M."/>
            <person name="Watanabe M."/>
            <person name="Hiraoka S."/>
            <person name="Chiba Y."/>
            <person name="Ishida S."/>
            <person name="Ono Y."/>
            <person name="Takiguchi S."/>
            <person name="Watanabe S."/>
            <person name="Yosida M."/>
            <person name="Hotuta T."/>
            <person name="Kusano J."/>
            <person name="Kanehori K."/>
            <person name="Takahashi-Fujii A."/>
            <person name="Hara H."/>
            <person name="Tanase T.-O."/>
            <person name="Nomura Y."/>
            <person name="Togiya S."/>
            <person name="Komai F."/>
            <person name="Hara R."/>
            <person name="Takeuchi K."/>
            <person name="Arita M."/>
            <person name="Imose N."/>
            <person name="Musashino K."/>
            <person name="Yuuki H."/>
            <person name="Oshima A."/>
            <person name="Sasaki N."/>
            <person name="Aotsuka S."/>
            <person name="Yoshikawa Y."/>
            <person name="Matsunawa H."/>
            <person name="Ichihara T."/>
            <person name="Shiohata N."/>
            <person name="Sano S."/>
            <person name="Moriya S."/>
            <person name="Momiyama H."/>
            <person name="Satoh N."/>
            <person name="Takami S."/>
            <person name="Terashima Y."/>
            <person name="Suzuki O."/>
            <person name="Nakagawa S."/>
            <person name="Senoh A."/>
            <person name="Mizoguchi H."/>
            <person name="Goto Y."/>
            <person name="Shimizu F."/>
            <person name="Wakebe H."/>
            <person name="Hishigaki H."/>
            <person name="Watanabe T."/>
            <person name="Sugiyama A."/>
            <person name="Takemoto M."/>
            <person name="Kawakami B."/>
            <person name="Yamazaki M."/>
            <person name="Watanabe K."/>
            <person name="Kumagai A."/>
            <person name="Itakura S."/>
            <person name="Fukuzumi Y."/>
            <person name="Fujimori Y."/>
            <person name="Komiyama M."/>
            <person name="Tashiro H."/>
            <person name="Tanigami A."/>
            <person name="Fujiwara T."/>
            <person name="Ono T."/>
            <person name="Yamada K."/>
            <person name="Fujii Y."/>
            <person name="Ozaki K."/>
            <person name="Hirao M."/>
            <person name="Ohmori Y."/>
            <person name="Kawabata A."/>
            <person name="Hikiji T."/>
            <person name="Kobatake N."/>
            <person name="Inagaki H."/>
            <person name="Ikema Y."/>
            <person name="Okamoto S."/>
            <person name="Okitani R."/>
            <person name="Kawakami T."/>
            <person name="Noguchi S."/>
            <person name="Itoh T."/>
            <person name="Shigeta K."/>
            <person name="Senba T."/>
            <person name="Matsumura K."/>
            <person name="Nakajima Y."/>
            <person name="Mizuno T."/>
            <person name="Morinaga M."/>
            <person name="Sasaki M."/>
            <person name="Togashi T."/>
            <person name="Oyama M."/>
            <person name="Hata H."/>
            <person name="Watanabe M."/>
            <person name="Komatsu T."/>
            <person name="Mizushima-Sugano J."/>
            <person name="Satoh T."/>
            <person name="Shirai Y."/>
            <person name="Takahashi Y."/>
            <person name="Nakagawa K."/>
            <person name="Okumura K."/>
            <person name="Nagase T."/>
            <person name="Nomura N."/>
            <person name="Kikuchi H."/>
            <person name="Masuho Y."/>
            <person name="Yamashita R."/>
            <person name="Nakai K."/>
            <person name="Yada T."/>
            <person name="Nakamura Y."/>
            <person name="Ohara O."/>
            <person name="Isogai T."/>
            <person name="Sugano S."/>
        </authorList>
    </citation>
    <scope>NUCLEOTIDE SEQUENCE [LARGE SCALE MRNA] (ISOFORM 4)</scope>
    <source>
        <tissue>Teratocarcinoma</tissue>
    </source>
</reference>
<reference key="5">
    <citation type="journal article" date="2004" name="Genome Res.">
        <title>The status, quality, and expansion of the NIH full-length cDNA project: the Mammalian Gene Collection (MGC).</title>
        <authorList>
            <consortium name="The MGC Project Team"/>
        </authorList>
    </citation>
    <scope>NUCLEOTIDE SEQUENCE [LARGE SCALE MRNA] (ISOFORM 2)</scope>
    <source>
        <tissue>Colon</tissue>
    </source>
</reference>
<reference key="6">
    <citation type="journal article" date="2005" name="DNA Res.">
        <title>Signal sequence and keyword trap in silico for selection of full-length human cDNAs encoding secretion or membrane proteins from oligo-capped cDNA libraries.</title>
        <authorList>
            <person name="Otsuki T."/>
            <person name="Ota T."/>
            <person name="Nishikawa T."/>
            <person name="Hayashi K."/>
            <person name="Suzuki Y."/>
            <person name="Yamamoto J."/>
            <person name="Wakamatsu A."/>
            <person name="Kimura K."/>
            <person name="Sakamoto K."/>
            <person name="Hatano N."/>
            <person name="Kawai Y."/>
            <person name="Ishii S."/>
            <person name="Saito K."/>
            <person name="Kojima S."/>
            <person name="Sugiyama T."/>
            <person name="Ono T."/>
            <person name="Okano K."/>
            <person name="Yoshikawa Y."/>
            <person name="Aotsuka S."/>
            <person name="Sasaki N."/>
            <person name="Hattori A."/>
            <person name="Okumura K."/>
            <person name="Nagai K."/>
            <person name="Sugano S."/>
            <person name="Isogai T."/>
        </authorList>
    </citation>
    <scope>NUCLEOTIDE SEQUENCE [LARGE SCALE MRNA] OF 350-1278 (ISOFORM 3)</scope>
    <source>
        <tissue>Embryo</tissue>
    </source>
</reference>
<reference key="7">
    <citation type="journal article" date="2004" name="J. Biol. Chem.">
        <title>Identification of an androgen response element in intron 8 of the sterol regulatory element-binding protein cleavage-activating protein gene allowing direct regulation by the androgen receptor.</title>
        <authorList>
            <person name="Heemers H."/>
            <person name="Verrijdt G."/>
            <person name="Organe S."/>
            <person name="Claessens F."/>
            <person name="Heyns W."/>
            <person name="Verhoeven G."/>
            <person name="Swinnen J.V."/>
        </authorList>
    </citation>
    <scope>INDUCTION</scope>
</reference>
<reference key="8">
    <citation type="journal article" date="2007" name="Proc. Natl. Acad. Sci. U.S.A.">
        <title>Sterol-regulated transport of SREBPs from endoplasmic reticulum to Golgi: oxysterols block transport by binding to Insig.</title>
        <authorList>
            <person name="Radhakrishnan A."/>
            <person name="Ikeda Y."/>
            <person name="Kwon H.J."/>
            <person name="Brown M.S."/>
            <person name="Goldstein J.L."/>
        </authorList>
    </citation>
    <scope>INTERACTION WITH INSIG2</scope>
</reference>
<reference key="9">
    <citation type="journal article" date="2008" name="Proc. Natl. Acad. Sci. U.S.A.">
        <title>A quantitative atlas of mitotic phosphorylation.</title>
        <authorList>
            <person name="Dephoure N."/>
            <person name="Zhou C."/>
            <person name="Villen J."/>
            <person name="Beausoleil S.A."/>
            <person name="Bakalarski C.E."/>
            <person name="Elledge S.J."/>
            <person name="Gygi S.P."/>
        </authorList>
    </citation>
    <scope>PHOSPHORYLATION [LARGE SCALE ANALYSIS] AT SER-907</scope>
    <scope>IDENTIFICATION BY MASS SPECTROMETRY [LARGE SCALE ANALYSIS]</scope>
    <source>
        <tissue>Cervix carcinoma</tissue>
    </source>
</reference>
<reference key="10">
    <citation type="journal article" date="2015" name="Science">
        <title>Crystal structure of a mycobacterial Insig homolog provides insight into how these sensors monitor sterol levels.</title>
        <authorList>
            <person name="Ren R."/>
            <person name="Zhou X."/>
            <person name="He Y."/>
            <person name="Ke M."/>
            <person name="Wu J."/>
            <person name="Liu X."/>
            <person name="Yan C."/>
            <person name="Wu Y."/>
            <person name="Gong X."/>
            <person name="Lei X."/>
            <person name="Yan S.F."/>
            <person name="Radhakrishnan A."/>
            <person name="Yan N."/>
        </authorList>
    </citation>
    <scope>INTERACTION WITH INSIG2</scope>
</reference>
<reference key="11">
    <citation type="journal article" date="2009" name="J. Biol. Chem.">
        <title>The sterol-sensing endoplasmic reticulum (ER) membrane protein TRC8 hampers ER to Golgi transport of sterol regulatory element-binding protein-2 (SREBP-2)/SREBP cleavage-activated protein and reduces SREBP-2 cleavage.</title>
        <authorList>
            <person name="Irisawa M."/>
            <person name="Inoue J."/>
            <person name="Ozawa N."/>
            <person name="Mori K."/>
            <person name="Sato R."/>
        </authorList>
    </citation>
    <scope>INTERACTION WITH RNF139</scope>
</reference>
<reference key="12">
    <citation type="journal article" date="2009" name="Sci. Signal.">
        <title>Quantitative phosphoproteomic analysis of T cell receptor signaling reveals system-wide modulation of protein-protein interactions.</title>
        <authorList>
            <person name="Mayya V."/>
            <person name="Lundgren D.H."/>
            <person name="Hwang S.-I."/>
            <person name="Rezaul K."/>
            <person name="Wu L."/>
            <person name="Eng J.K."/>
            <person name="Rodionov V."/>
            <person name="Han D.K."/>
        </authorList>
    </citation>
    <scope>IDENTIFICATION BY MASS SPECTROMETRY [LARGE SCALE ANALYSIS]</scope>
    <source>
        <tissue>Leukemic T-cell</tissue>
    </source>
</reference>
<reference key="13">
    <citation type="journal article" date="2013" name="J. Proteome Res.">
        <title>Toward a comprehensive characterization of a human cancer cell phosphoproteome.</title>
        <authorList>
            <person name="Zhou H."/>
            <person name="Di Palma S."/>
            <person name="Preisinger C."/>
            <person name="Peng M."/>
            <person name="Polat A.N."/>
            <person name="Heck A.J."/>
            <person name="Mohammed S."/>
        </authorList>
    </citation>
    <scope>PHOSPHORYLATION [LARGE SCALE ANALYSIS] AT SER-822; SER-838; SER-851 AND SER-907</scope>
    <scope>IDENTIFICATION BY MASS SPECTROMETRY [LARGE SCALE ANALYSIS]</scope>
    <source>
        <tissue>Cervix carcinoma</tissue>
        <tissue>Erythroleukemia</tissue>
    </source>
</reference>
<reference key="14">
    <citation type="journal article" date="2014" name="J. Proteomics">
        <title>An enzyme assisted RP-RPLC approach for in-depth analysis of human liver phosphoproteome.</title>
        <authorList>
            <person name="Bian Y."/>
            <person name="Song C."/>
            <person name="Cheng K."/>
            <person name="Dong M."/>
            <person name="Wang F."/>
            <person name="Huang J."/>
            <person name="Sun D."/>
            <person name="Wang L."/>
            <person name="Ye M."/>
            <person name="Zou H."/>
        </authorList>
    </citation>
    <scope>PHOSPHORYLATION [LARGE SCALE ANALYSIS] AT SER-822 AND SER-937</scope>
    <scope>IDENTIFICATION BY MASS SPECTROMETRY [LARGE SCALE ANALYSIS]</scope>
    <source>
        <tissue>Liver</tissue>
    </source>
</reference>
<reference key="15">
    <citation type="journal article" date="2015" name="Nat. Commun.">
        <title>PAQR3 modulates cholesterol homeostasis by anchoring Scap/SREBP complex to the Golgi apparatus.</title>
        <authorList>
            <person name="Xu D."/>
            <person name="Wang Z."/>
            <person name="Zhang Y."/>
            <person name="Jiang W."/>
            <person name="Pan Y."/>
            <person name="Song B.L."/>
            <person name="Chen Y."/>
        </authorList>
    </citation>
    <scope>FUNCTION</scope>
    <scope>INTERACTION WITH PAQR3</scope>
    <scope>SUBCELLULAR LOCATION</scope>
</reference>
<reference key="16">
    <citation type="journal article" date="2017" name="Nat. Rev. Endocrinol.">
        <title>SREBP-regulated lipid metabolism: convergent physiology - divergent pathophysiology.</title>
        <authorList>
            <person name="Shimano H."/>
            <person name="Sato R."/>
        </authorList>
    </citation>
    <scope>REVIEW</scope>
</reference>
<reference key="17">
    <citation type="journal article" date="2020" name="Nat. Commun.">
        <title>Haploid genetic screens identify SPRING/C12ORF49 as a determinant of SREBP signaling and cholesterol metabolism.</title>
        <authorList>
            <person name="Loregger A."/>
            <person name="Raaben M."/>
            <person name="Nieuwenhuis J."/>
            <person name="Tan J.M.E."/>
            <person name="Jae L.T."/>
            <person name="van den Hengel L.G."/>
            <person name="Hendrix S."/>
            <person name="van den Berg M."/>
            <person name="Scheij S."/>
            <person name="Song J.Y."/>
            <person name="Huijbers I.J."/>
            <person name="Kroese L.J."/>
            <person name="Ottenhoff R."/>
            <person name="van Weeghel M."/>
            <person name="van de Sluis B."/>
            <person name="Brummelkamp T."/>
            <person name="Zelcer N."/>
        </authorList>
    </citation>
    <scope>INTERACTION WITH SPRING1</scope>
    <scope>SUBCELLULAR LOCATION</scope>
</reference>
<reference key="18">
    <citation type="journal article" date="1999" name="J. Hum. Genet.">
        <title>A common Ile796Val polymorphism of the human SREBP cleavage-activating protein (SCAP) gene.</title>
        <authorList>
            <person name="Iwaki K."/>
            <person name="Nakajima T."/>
            <person name="Ota N."/>
            <person name="Emi M."/>
        </authorList>
    </citation>
    <scope>VARIANT ILE-798</scope>
</reference>
<dbReference type="EMBL" id="D83782">
    <property type="protein sequence ID" value="BAA12111.2"/>
    <property type="status" value="ALT_INIT"/>
    <property type="molecule type" value="mRNA"/>
</dbReference>
<dbReference type="EMBL" id="AK027402">
    <property type="protein sequence ID" value="BAB55088.1"/>
    <property type="molecule type" value="mRNA"/>
</dbReference>
<dbReference type="EMBL" id="BC020987">
    <property type="protein sequence ID" value="AAH20987.1"/>
    <property type="molecule type" value="mRNA"/>
</dbReference>
<dbReference type="EMBL" id="AK075528">
    <property type="protein sequence ID" value="BAC11673.1"/>
    <property type="status" value="ALT_INIT"/>
    <property type="molecule type" value="mRNA"/>
</dbReference>
<dbReference type="CCDS" id="CCDS2755.2">
    <molecule id="Q12770-1"/>
</dbReference>
<dbReference type="RefSeq" id="NP_036367.2">
    <molecule id="Q12770-1"/>
    <property type="nucleotide sequence ID" value="NM_012235.4"/>
</dbReference>
<dbReference type="RefSeq" id="XP_011531803.1">
    <molecule id="Q12770-1"/>
    <property type="nucleotide sequence ID" value="XM_011533501.2"/>
</dbReference>
<dbReference type="RefSeq" id="XP_016861407.1">
    <molecule id="Q12770-1"/>
    <property type="nucleotide sequence ID" value="XM_017005918.2"/>
</dbReference>
<dbReference type="RefSeq" id="XP_016861410.1">
    <property type="nucleotide sequence ID" value="XM_017005921.1"/>
</dbReference>
<dbReference type="RefSeq" id="XP_047303688.1">
    <molecule id="Q12770-1"/>
    <property type="nucleotide sequence ID" value="XM_047447732.1"/>
</dbReference>
<dbReference type="RefSeq" id="XP_047303689.1">
    <molecule id="Q12770-1"/>
    <property type="nucleotide sequence ID" value="XM_047447733.1"/>
</dbReference>
<dbReference type="RefSeq" id="XP_047303690.1">
    <molecule id="Q12770-1"/>
    <property type="nucleotide sequence ID" value="XM_047447734.1"/>
</dbReference>
<dbReference type="RefSeq" id="XP_047303691.1">
    <molecule id="Q12770-1"/>
    <property type="nucleotide sequence ID" value="XM_047447735.1"/>
</dbReference>
<dbReference type="RefSeq" id="XP_047303692.1">
    <molecule id="Q12770-1"/>
    <property type="nucleotide sequence ID" value="XM_047447736.1"/>
</dbReference>
<dbReference type="PDB" id="6M49">
    <property type="method" value="EM"/>
    <property type="resolution" value="3.70 A"/>
    <property type="chains" value="B=1-735"/>
</dbReference>
<dbReference type="PDB" id="7ETW">
    <property type="method" value="EM"/>
    <property type="resolution" value="4.10 A"/>
    <property type="chains" value="B=1-735"/>
</dbReference>
<dbReference type="PDBsum" id="6M49"/>
<dbReference type="PDBsum" id="7ETW"/>
<dbReference type="EMDB" id="EMD-30074"/>
<dbReference type="EMDB" id="EMD-31303"/>
<dbReference type="SMR" id="Q12770"/>
<dbReference type="BioGRID" id="116596">
    <property type="interactions" value="136"/>
</dbReference>
<dbReference type="ComplexPortal" id="CPX-25721">
    <property type="entry name" value="SREBP-SCAP transcription regulator complex, SREBF2 variant"/>
</dbReference>
<dbReference type="ComplexPortal" id="CPX-25745">
    <property type="entry name" value="SREBP-SCAP transcription regulator complex, SREBF1 variant"/>
</dbReference>
<dbReference type="CORUM" id="Q12770"/>
<dbReference type="FunCoup" id="Q12770">
    <property type="interactions" value="1476"/>
</dbReference>
<dbReference type="IntAct" id="Q12770">
    <property type="interactions" value="94"/>
</dbReference>
<dbReference type="MINT" id="Q12770"/>
<dbReference type="STRING" id="9606.ENSP00000265565"/>
<dbReference type="ChEMBL" id="CHEMBL4879458"/>
<dbReference type="GlyCosmos" id="Q12770">
    <property type="glycosylation" value="3 sites, No reported glycans"/>
</dbReference>
<dbReference type="GlyGen" id="Q12770">
    <property type="glycosylation" value="5 sites, 5 N-linked glycans (3 sites), 2 O-linked glycans (2 sites)"/>
</dbReference>
<dbReference type="iPTMnet" id="Q12770"/>
<dbReference type="PhosphoSitePlus" id="Q12770"/>
<dbReference type="SwissPalm" id="Q12770"/>
<dbReference type="BioMuta" id="SCAP"/>
<dbReference type="DMDM" id="116242783"/>
<dbReference type="jPOST" id="Q12770"/>
<dbReference type="MassIVE" id="Q12770"/>
<dbReference type="PaxDb" id="9606-ENSP00000265565"/>
<dbReference type="PeptideAtlas" id="Q12770"/>
<dbReference type="ProteomicsDB" id="58915">
    <molecule id="Q12770-1"/>
</dbReference>
<dbReference type="ProteomicsDB" id="58916">
    <molecule id="Q12770-2"/>
</dbReference>
<dbReference type="ProteomicsDB" id="58917">
    <molecule id="Q12770-3"/>
</dbReference>
<dbReference type="ProteomicsDB" id="58918">
    <molecule id="Q12770-4"/>
</dbReference>
<dbReference type="Pumba" id="Q12770"/>
<dbReference type="TopDownProteomics" id="Q12770-2">
    <molecule id="Q12770-2"/>
</dbReference>
<dbReference type="Antibodypedia" id="1330">
    <property type="antibodies" value="232 antibodies from 27 providers"/>
</dbReference>
<dbReference type="DNASU" id="22937"/>
<dbReference type="Ensembl" id="ENST00000265565.10">
    <molecule id="Q12770-1"/>
    <property type="protein sequence ID" value="ENSP00000265565.5"/>
    <property type="gene ID" value="ENSG00000114650.21"/>
</dbReference>
<dbReference type="Ensembl" id="ENST00000648151.1">
    <molecule id="Q12770-1"/>
    <property type="protein sequence ID" value="ENSP00000497087.1"/>
    <property type="gene ID" value="ENSG00000114650.21"/>
</dbReference>
<dbReference type="GeneID" id="22937"/>
<dbReference type="KEGG" id="hsa:22937"/>
<dbReference type="MANE-Select" id="ENST00000265565.10">
    <property type="protein sequence ID" value="ENSP00000265565.5"/>
    <property type="RefSeq nucleotide sequence ID" value="NM_012235.4"/>
    <property type="RefSeq protein sequence ID" value="NP_036367.2"/>
</dbReference>
<dbReference type="UCSC" id="uc003crh.2">
    <molecule id="Q12770-1"/>
    <property type="organism name" value="human"/>
</dbReference>
<dbReference type="AGR" id="HGNC:30634"/>
<dbReference type="CTD" id="22937"/>
<dbReference type="DisGeNET" id="22937"/>
<dbReference type="GeneCards" id="SCAP"/>
<dbReference type="HGNC" id="HGNC:30634">
    <property type="gene designation" value="SCAP"/>
</dbReference>
<dbReference type="HPA" id="ENSG00000114650">
    <property type="expression patterns" value="Low tissue specificity"/>
</dbReference>
<dbReference type="MIM" id="601510">
    <property type="type" value="gene"/>
</dbReference>
<dbReference type="neXtProt" id="NX_Q12770"/>
<dbReference type="OpenTargets" id="ENSG00000114650"/>
<dbReference type="PharmGKB" id="PA162402461"/>
<dbReference type="VEuPathDB" id="HostDB:ENSG00000114650"/>
<dbReference type="eggNOG" id="KOG1933">
    <property type="taxonomic scope" value="Eukaryota"/>
</dbReference>
<dbReference type="GeneTree" id="ENSGT00940000158130"/>
<dbReference type="HOGENOM" id="CLU_006510_0_0_1"/>
<dbReference type="InParanoid" id="Q12770"/>
<dbReference type="OMA" id="IMKQYNV"/>
<dbReference type="OrthoDB" id="361494at2759"/>
<dbReference type="PAN-GO" id="Q12770">
    <property type="GO annotations" value="3 GO annotations based on evolutionary models"/>
</dbReference>
<dbReference type="PhylomeDB" id="Q12770"/>
<dbReference type="TreeFam" id="TF315236"/>
<dbReference type="PathwayCommons" id="Q12770"/>
<dbReference type="Reactome" id="R-HSA-1655829">
    <property type="pathway name" value="Regulation of cholesterol biosynthesis by SREBP (SREBF)"/>
</dbReference>
<dbReference type="SignaLink" id="Q12770"/>
<dbReference type="SIGNOR" id="Q12770"/>
<dbReference type="BioGRID-ORCS" id="22937">
    <property type="hits" value="587 hits in 1197 CRISPR screens"/>
</dbReference>
<dbReference type="ChiTaRS" id="SCAP">
    <property type="organism name" value="human"/>
</dbReference>
<dbReference type="GeneWiki" id="SREBP_cleavage_activating_protein"/>
<dbReference type="GenomeRNAi" id="22937"/>
<dbReference type="Pharos" id="Q12770">
    <property type="development level" value="Tbio"/>
</dbReference>
<dbReference type="PRO" id="PR:Q12770"/>
<dbReference type="Proteomes" id="UP000005640">
    <property type="component" value="Chromosome 3"/>
</dbReference>
<dbReference type="RNAct" id="Q12770">
    <property type="molecule type" value="protein"/>
</dbReference>
<dbReference type="Bgee" id="ENSG00000114650">
    <property type="expression patterns" value="Expressed in adrenal tissue and 205 other cell types or tissues"/>
</dbReference>
<dbReference type="ExpressionAtlas" id="Q12770">
    <property type="expression patterns" value="baseline and differential"/>
</dbReference>
<dbReference type="GO" id="GO:0005783">
    <property type="term" value="C:endoplasmic reticulum"/>
    <property type="evidence" value="ECO:0000303"/>
    <property type="project" value="UniProtKB"/>
</dbReference>
<dbReference type="GO" id="GO:0005789">
    <property type="term" value="C:endoplasmic reticulum membrane"/>
    <property type="evidence" value="ECO:0000314"/>
    <property type="project" value="UniProtKB"/>
</dbReference>
<dbReference type="GO" id="GO:0012507">
    <property type="term" value="C:ER to Golgi transport vesicle membrane"/>
    <property type="evidence" value="ECO:0007669"/>
    <property type="project" value="UniProtKB-SubCell"/>
</dbReference>
<dbReference type="GO" id="GO:0005794">
    <property type="term" value="C:Golgi apparatus"/>
    <property type="evidence" value="ECO:0000303"/>
    <property type="project" value="UniProtKB"/>
</dbReference>
<dbReference type="GO" id="GO:0000139">
    <property type="term" value="C:Golgi membrane"/>
    <property type="evidence" value="ECO:0000314"/>
    <property type="project" value="UniProtKB"/>
</dbReference>
<dbReference type="GO" id="GO:0016020">
    <property type="term" value="C:membrane"/>
    <property type="evidence" value="ECO:0000303"/>
    <property type="project" value="UniProtKB"/>
</dbReference>
<dbReference type="GO" id="GO:0032936">
    <property type="term" value="C:SREBP-SCAP complex"/>
    <property type="evidence" value="ECO:0000318"/>
    <property type="project" value="GO_Central"/>
</dbReference>
<dbReference type="GO" id="GO:0044877">
    <property type="term" value="F:protein-containing complex binding"/>
    <property type="evidence" value="ECO:0007669"/>
    <property type="project" value="Ensembl"/>
</dbReference>
<dbReference type="GO" id="GO:0032934">
    <property type="term" value="F:sterol binding"/>
    <property type="evidence" value="ECO:0000250"/>
    <property type="project" value="UniProtKB"/>
</dbReference>
<dbReference type="GO" id="GO:0051082">
    <property type="term" value="F:unfolded protein binding"/>
    <property type="evidence" value="ECO:0000303"/>
    <property type="project" value="UniProtKB"/>
</dbReference>
<dbReference type="GO" id="GO:0008203">
    <property type="term" value="P:cholesterol metabolic process"/>
    <property type="evidence" value="ECO:0000250"/>
    <property type="project" value="UniProtKB"/>
</dbReference>
<dbReference type="GO" id="GO:0090110">
    <property type="term" value="P:COPII-coated vesicle cargo loading"/>
    <property type="evidence" value="ECO:0000250"/>
    <property type="project" value="UniProtKB"/>
</dbReference>
<dbReference type="GO" id="GO:0006955">
    <property type="term" value="P:immune response"/>
    <property type="evidence" value="ECO:0007669"/>
    <property type="project" value="Ensembl"/>
</dbReference>
<dbReference type="GO" id="GO:0045541">
    <property type="term" value="P:negative regulation of cholesterol biosynthetic process"/>
    <property type="evidence" value="ECO:0000303"/>
    <property type="project" value="UniProtKB"/>
</dbReference>
<dbReference type="GO" id="GO:0045542">
    <property type="term" value="P:positive regulation of cholesterol biosynthetic process"/>
    <property type="evidence" value="ECO:0000314"/>
    <property type="project" value="UniProtKB"/>
</dbReference>
<dbReference type="GO" id="GO:0045540">
    <property type="term" value="P:regulation of cholesterol biosynthetic process"/>
    <property type="evidence" value="ECO:0000318"/>
    <property type="project" value="GO_Central"/>
</dbReference>
<dbReference type="GO" id="GO:0042304">
    <property type="term" value="P:regulation of fatty acid biosynthetic process"/>
    <property type="evidence" value="ECO:0007669"/>
    <property type="project" value="Ensembl"/>
</dbReference>
<dbReference type="GO" id="GO:0001666">
    <property type="term" value="P:response to hypoxia"/>
    <property type="evidence" value="ECO:0007669"/>
    <property type="project" value="Ensembl"/>
</dbReference>
<dbReference type="GO" id="GO:0032868">
    <property type="term" value="P:response to insulin"/>
    <property type="evidence" value="ECO:0007669"/>
    <property type="project" value="Ensembl"/>
</dbReference>
<dbReference type="GO" id="GO:0033552">
    <property type="term" value="P:response to vitamin B3"/>
    <property type="evidence" value="ECO:0007669"/>
    <property type="project" value="Ensembl"/>
</dbReference>
<dbReference type="GO" id="GO:0032933">
    <property type="term" value="P:SREBP signaling pathway"/>
    <property type="evidence" value="ECO:0000314"/>
    <property type="project" value="UniProtKB"/>
</dbReference>
<dbReference type="FunFam" id="2.130.10.10:FF:000209">
    <property type="entry name" value="sterol regulatory element-binding protein cleavage-activating protein-like"/>
    <property type="match status" value="1"/>
</dbReference>
<dbReference type="FunFam" id="2.130.10.10:FF:000391">
    <property type="entry name" value="sterol regulatory element-binding protein cleavage-activating protein-like"/>
    <property type="match status" value="1"/>
</dbReference>
<dbReference type="Gene3D" id="2.130.10.10">
    <property type="entry name" value="YVTN repeat-like/Quinoprotein amine dehydrogenase"/>
    <property type="match status" value="2"/>
</dbReference>
<dbReference type="InterPro" id="IPR057042">
    <property type="entry name" value="Beta-prop_SCAP"/>
</dbReference>
<dbReference type="InterPro" id="IPR053958">
    <property type="entry name" value="HMGCR/SNAP/NPC1-like_SSD"/>
</dbReference>
<dbReference type="InterPro" id="IPR030225">
    <property type="entry name" value="SCAP"/>
</dbReference>
<dbReference type="InterPro" id="IPR057041">
    <property type="entry name" value="SCAP_N"/>
</dbReference>
<dbReference type="InterPro" id="IPR000731">
    <property type="entry name" value="SSD"/>
</dbReference>
<dbReference type="InterPro" id="IPR015943">
    <property type="entry name" value="WD40/YVTN_repeat-like_dom_sf"/>
</dbReference>
<dbReference type="InterPro" id="IPR019775">
    <property type="entry name" value="WD40_repeat_CS"/>
</dbReference>
<dbReference type="InterPro" id="IPR036322">
    <property type="entry name" value="WD40_repeat_dom_sf"/>
</dbReference>
<dbReference type="InterPro" id="IPR001680">
    <property type="entry name" value="WD40_rpt"/>
</dbReference>
<dbReference type="PANTHER" id="PTHR46378">
    <property type="entry name" value="STEROL REGULATORY ELEMENT-BINDING PROTEIN CLEAVAGE-ACTIVATING PROTEIN"/>
    <property type="match status" value="1"/>
</dbReference>
<dbReference type="PANTHER" id="PTHR46378:SF1">
    <property type="entry name" value="STEROL REGULATORY ELEMENT-BINDING PROTEIN CLEAVAGE-ACTIVATING PROTEIN"/>
    <property type="match status" value="1"/>
</dbReference>
<dbReference type="Pfam" id="PF24017">
    <property type="entry name" value="Beta-prop_SCAP"/>
    <property type="match status" value="1"/>
</dbReference>
<dbReference type="Pfam" id="PF24006">
    <property type="entry name" value="SCAP_N"/>
    <property type="match status" value="1"/>
</dbReference>
<dbReference type="Pfam" id="PF12349">
    <property type="entry name" value="Sterol-sensing"/>
    <property type="match status" value="1"/>
</dbReference>
<dbReference type="SMART" id="SM00320">
    <property type="entry name" value="WD40"/>
    <property type="match status" value="6"/>
</dbReference>
<dbReference type="SUPFAM" id="SSF82866">
    <property type="entry name" value="Multidrug efflux transporter AcrB transmembrane domain"/>
    <property type="match status" value="1"/>
</dbReference>
<dbReference type="SUPFAM" id="SSF50978">
    <property type="entry name" value="WD40 repeat-like"/>
    <property type="match status" value="1"/>
</dbReference>
<dbReference type="PROSITE" id="PS50156">
    <property type="entry name" value="SSD"/>
    <property type="match status" value="1"/>
</dbReference>
<dbReference type="PROSITE" id="PS00678">
    <property type="entry name" value="WD_REPEATS_1"/>
    <property type="match status" value="1"/>
</dbReference>
<dbReference type="PROSITE" id="PS50082">
    <property type="entry name" value="WD_REPEATS_2"/>
    <property type="match status" value="1"/>
</dbReference>
<dbReference type="PROSITE" id="PS50294">
    <property type="entry name" value="WD_REPEATS_REGION"/>
    <property type="match status" value="1"/>
</dbReference>